<organism>
    <name type="scientific">Escherichia coli O7:K1 (strain IAI39 / ExPEC)</name>
    <dbReference type="NCBI Taxonomy" id="585057"/>
    <lineage>
        <taxon>Bacteria</taxon>
        <taxon>Pseudomonadati</taxon>
        <taxon>Pseudomonadota</taxon>
        <taxon>Gammaproteobacteria</taxon>
        <taxon>Enterobacterales</taxon>
        <taxon>Enterobacteriaceae</taxon>
        <taxon>Escherichia</taxon>
    </lineage>
</organism>
<gene>
    <name evidence="1" type="primary">uvrC</name>
    <name type="ordered locus">ECIAI39_1142</name>
</gene>
<accession>B7NS11</accession>
<keyword id="KW-0963">Cytoplasm</keyword>
<keyword id="KW-0227">DNA damage</keyword>
<keyword id="KW-0228">DNA excision</keyword>
<keyword id="KW-0234">DNA repair</keyword>
<keyword id="KW-0267">Excision nuclease</keyword>
<keyword id="KW-0742">SOS response</keyword>
<evidence type="ECO:0000255" key="1">
    <source>
        <dbReference type="HAMAP-Rule" id="MF_00203"/>
    </source>
</evidence>
<proteinExistence type="inferred from homology"/>
<dbReference type="EMBL" id="CU928164">
    <property type="protein sequence ID" value="CAR17276.1"/>
    <property type="molecule type" value="Genomic_DNA"/>
</dbReference>
<dbReference type="RefSeq" id="WP_001283421.1">
    <property type="nucleotide sequence ID" value="NC_011750.1"/>
</dbReference>
<dbReference type="RefSeq" id="YP_002407152.1">
    <property type="nucleotide sequence ID" value="NC_011750.1"/>
</dbReference>
<dbReference type="SMR" id="B7NS11"/>
<dbReference type="STRING" id="585057.ECIAI39_1142"/>
<dbReference type="GeneID" id="93776218"/>
<dbReference type="KEGG" id="ect:ECIAI39_1142"/>
<dbReference type="PATRIC" id="fig|585057.6.peg.1193"/>
<dbReference type="HOGENOM" id="CLU_014841_3_0_6"/>
<dbReference type="Proteomes" id="UP000000749">
    <property type="component" value="Chromosome"/>
</dbReference>
<dbReference type="GO" id="GO:0005737">
    <property type="term" value="C:cytoplasm"/>
    <property type="evidence" value="ECO:0007669"/>
    <property type="project" value="UniProtKB-SubCell"/>
</dbReference>
<dbReference type="GO" id="GO:0009380">
    <property type="term" value="C:excinuclease repair complex"/>
    <property type="evidence" value="ECO:0007669"/>
    <property type="project" value="InterPro"/>
</dbReference>
<dbReference type="GO" id="GO:0003677">
    <property type="term" value="F:DNA binding"/>
    <property type="evidence" value="ECO:0007669"/>
    <property type="project" value="UniProtKB-UniRule"/>
</dbReference>
<dbReference type="GO" id="GO:0009381">
    <property type="term" value="F:excinuclease ABC activity"/>
    <property type="evidence" value="ECO:0007669"/>
    <property type="project" value="UniProtKB-UniRule"/>
</dbReference>
<dbReference type="GO" id="GO:0006289">
    <property type="term" value="P:nucleotide-excision repair"/>
    <property type="evidence" value="ECO:0007669"/>
    <property type="project" value="UniProtKB-UniRule"/>
</dbReference>
<dbReference type="GO" id="GO:0009432">
    <property type="term" value="P:SOS response"/>
    <property type="evidence" value="ECO:0007669"/>
    <property type="project" value="UniProtKB-UniRule"/>
</dbReference>
<dbReference type="CDD" id="cd10434">
    <property type="entry name" value="GIY-YIG_UvrC_Cho"/>
    <property type="match status" value="1"/>
</dbReference>
<dbReference type="FunFam" id="1.10.150.20:FF:000005">
    <property type="entry name" value="UvrABC system protein C"/>
    <property type="match status" value="1"/>
</dbReference>
<dbReference type="FunFam" id="3.30.420.340:FF:000001">
    <property type="entry name" value="UvrABC system protein C"/>
    <property type="match status" value="1"/>
</dbReference>
<dbReference type="FunFam" id="3.40.1440.10:FF:000001">
    <property type="entry name" value="UvrABC system protein C"/>
    <property type="match status" value="1"/>
</dbReference>
<dbReference type="FunFam" id="4.10.860.10:FF:000002">
    <property type="entry name" value="UvrABC system protein C"/>
    <property type="match status" value="1"/>
</dbReference>
<dbReference type="Gene3D" id="1.10.150.20">
    <property type="entry name" value="5' to 3' exonuclease, C-terminal subdomain"/>
    <property type="match status" value="1"/>
</dbReference>
<dbReference type="Gene3D" id="3.40.1440.10">
    <property type="entry name" value="GIY-YIG endonuclease"/>
    <property type="match status" value="1"/>
</dbReference>
<dbReference type="Gene3D" id="4.10.860.10">
    <property type="entry name" value="UVR domain"/>
    <property type="match status" value="1"/>
</dbReference>
<dbReference type="Gene3D" id="3.30.420.340">
    <property type="entry name" value="UvrC, RNAse H endonuclease domain"/>
    <property type="match status" value="1"/>
</dbReference>
<dbReference type="HAMAP" id="MF_00203">
    <property type="entry name" value="UvrC"/>
    <property type="match status" value="1"/>
</dbReference>
<dbReference type="InterPro" id="IPR000305">
    <property type="entry name" value="GIY-YIG_endonuc"/>
</dbReference>
<dbReference type="InterPro" id="IPR035901">
    <property type="entry name" value="GIY-YIG_endonuc_sf"/>
</dbReference>
<dbReference type="InterPro" id="IPR047296">
    <property type="entry name" value="GIY-YIG_UvrC_Cho"/>
</dbReference>
<dbReference type="InterPro" id="IPR003583">
    <property type="entry name" value="Hlx-hairpin-Hlx_DNA-bd_motif"/>
</dbReference>
<dbReference type="InterPro" id="IPR010994">
    <property type="entry name" value="RuvA_2-like"/>
</dbReference>
<dbReference type="InterPro" id="IPR001943">
    <property type="entry name" value="UVR_dom"/>
</dbReference>
<dbReference type="InterPro" id="IPR036876">
    <property type="entry name" value="UVR_dom_sf"/>
</dbReference>
<dbReference type="InterPro" id="IPR050066">
    <property type="entry name" value="UvrABC_protein_C"/>
</dbReference>
<dbReference type="InterPro" id="IPR004791">
    <property type="entry name" value="UvrC"/>
</dbReference>
<dbReference type="InterPro" id="IPR001162">
    <property type="entry name" value="UvrC_RNase_H_dom"/>
</dbReference>
<dbReference type="InterPro" id="IPR038476">
    <property type="entry name" value="UvrC_RNase_H_dom_sf"/>
</dbReference>
<dbReference type="NCBIfam" id="NF001824">
    <property type="entry name" value="PRK00558.1-5"/>
    <property type="match status" value="1"/>
</dbReference>
<dbReference type="NCBIfam" id="TIGR00194">
    <property type="entry name" value="uvrC"/>
    <property type="match status" value="1"/>
</dbReference>
<dbReference type="PANTHER" id="PTHR30562:SF1">
    <property type="entry name" value="UVRABC SYSTEM PROTEIN C"/>
    <property type="match status" value="1"/>
</dbReference>
<dbReference type="PANTHER" id="PTHR30562">
    <property type="entry name" value="UVRC/OXIDOREDUCTASE"/>
    <property type="match status" value="1"/>
</dbReference>
<dbReference type="Pfam" id="PF01541">
    <property type="entry name" value="GIY-YIG"/>
    <property type="match status" value="1"/>
</dbReference>
<dbReference type="Pfam" id="PF14520">
    <property type="entry name" value="HHH_5"/>
    <property type="match status" value="1"/>
</dbReference>
<dbReference type="Pfam" id="PF02151">
    <property type="entry name" value="UVR"/>
    <property type="match status" value="1"/>
</dbReference>
<dbReference type="Pfam" id="PF22920">
    <property type="entry name" value="UvrC_RNaseH"/>
    <property type="match status" value="1"/>
</dbReference>
<dbReference type="Pfam" id="PF08459">
    <property type="entry name" value="UvrC_RNaseH_dom"/>
    <property type="match status" value="1"/>
</dbReference>
<dbReference type="SMART" id="SM00465">
    <property type="entry name" value="GIYc"/>
    <property type="match status" value="1"/>
</dbReference>
<dbReference type="SMART" id="SM00278">
    <property type="entry name" value="HhH1"/>
    <property type="match status" value="2"/>
</dbReference>
<dbReference type="SUPFAM" id="SSF46600">
    <property type="entry name" value="C-terminal UvrC-binding domain of UvrB"/>
    <property type="match status" value="1"/>
</dbReference>
<dbReference type="SUPFAM" id="SSF82771">
    <property type="entry name" value="GIY-YIG endonuclease"/>
    <property type="match status" value="1"/>
</dbReference>
<dbReference type="SUPFAM" id="SSF47781">
    <property type="entry name" value="RuvA domain 2-like"/>
    <property type="match status" value="1"/>
</dbReference>
<dbReference type="PROSITE" id="PS50164">
    <property type="entry name" value="GIY_YIG"/>
    <property type="match status" value="1"/>
</dbReference>
<dbReference type="PROSITE" id="PS50151">
    <property type="entry name" value="UVR"/>
    <property type="match status" value="1"/>
</dbReference>
<dbReference type="PROSITE" id="PS50165">
    <property type="entry name" value="UVRC"/>
    <property type="match status" value="1"/>
</dbReference>
<protein>
    <recommendedName>
        <fullName evidence="1">UvrABC system protein C</fullName>
        <shortName evidence="1">Protein UvrC</shortName>
    </recommendedName>
    <alternativeName>
        <fullName evidence="1">Excinuclease ABC subunit C</fullName>
    </alternativeName>
</protein>
<reference key="1">
    <citation type="journal article" date="2009" name="PLoS Genet.">
        <title>Organised genome dynamics in the Escherichia coli species results in highly diverse adaptive paths.</title>
        <authorList>
            <person name="Touchon M."/>
            <person name="Hoede C."/>
            <person name="Tenaillon O."/>
            <person name="Barbe V."/>
            <person name="Baeriswyl S."/>
            <person name="Bidet P."/>
            <person name="Bingen E."/>
            <person name="Bonacorsi S."/>
            <person name="Bouchier C."/>
            <person name="Bouvet O."/>
            <person name="Calteau A."/>
            <person name="Chiapello H."/>
            <person name="Clermont O."/>
            <person name="Cruveiller S."/>
            <person name="Danchin A."/>
            <person name="Diard M."/>
            <person name="Dossat C."/>
            <person name="Karoui M.E."/>
            <person name="Frapy E."/>
            <person name="Garry L."/>
            <person name="Ghigo J.M."/>
            <person name="Gilles A.M."/>
            <person name="Johnson J."/>
            <person name="Le Bouguenec C."/>
            <person name="Lescat M."/>
            <person name="Mangenot S."/>
            <person name="Martinez-Jehanne V."/>
            <person name="Matic I."/>
            <person name="Nassif X."/>
            <person name="Oztas S."/>
            <person name="Petit M.A."/>
            <person name="Pichon C."/>
            <person name="Rouy Z."/>
            <person name="Ruf C.S."/>
            <person name="Schneider D."/>
            <person name="Tourret J."/>
            <person name="Vacherie B."/>
            <person name="Vallenet D."/>
            <person name="Medigue C."/>
            <person name="Rocha E.P.C."/>
            <person name="Denamur E."/>
        </authorList>
    </citation>
    <scope>NUCLEOTIDE SEQUENCE [LARGE SCALE GENOMIC DNA]</scope>
    <source>
        <strain>IAI39 / ExPEC</strain>
    </source>
</reference>
<name>UVRC_ECO7I</name>
<feature type="chain" id="PRO_1000200586" description="UvrABC system protein C">
    <location>
        <begin position="1"/>
        <end position="610"/>
    </location>
</feature>
<feature type="domain" description="GIY-YIG" evidence="1">
    <location>
        <begin position="16"/>
        <end position="94"/>
    </location>
</feature>
<feature type="domain" description="UVR" evidence="1">
    <location>
        <begin position="204"/>
        <end position="239"/>
    </location>
</feature>
<sequence length="610" mass="68188">MSDQFDAKAFLKTVTSQPGVYRMYDAGGTVIYVGKAKDLKKRLSSYFRSNLASRKTEALVAQIQQIDVTVTHTETEALLLEHNYIKLYQPRYNVLLRDDKSYPFIFLSGDTHPRLAMHRGAKHAKGEYFGPFPNGYAVRETLALLQKIFPIRQCENSVYRNRSRPCLQYQIGRCLGPCVEGLVSEEEYAQQVEYVRLFLSGKDDQVLTQLISRMETASQNLEFEEAARIRDQIQAVRRVTEKQFVSNTGDDLDVIGVAFDAGMACVHVLFIRQGKVLGSRSYFPKVPGGTELSEVVETFVGQFYLQGSQMRTLPGEILLDFNLSDKTLLADSLSELAGRKINVQTKPRGDRARYLKLARTNAATALTSKLSQQSTVHQRLTALASVLKLPEVKRMECFDISHTMGEQTVASCVVFDANGPLRAEYRRYNITGITPGDDYAAMNQVLRRRYGKAIDDSKIPDVILIDGGKGQLAQAKNVFAELDVSWDKNHPLLLGVAKGADRKAGLETLFFEPEGEGFSLPPDSPALHVIQHIRDESHDHAIGGHRKKRAKVKNTSSLETIEGVGPKRRQMLLKYMGGLQGLRNASVEEIAKVPGISQGLAEKIFWSLKH</sequence>
<comment type="function">
    <text evidence="1">The UvrABC repair system catalyzes the recognition and processing of DNA lesions. UvrC both incises the 5' and 3' sides of the lesion. The N-terminal half is responsible for the 3' incision and the C-terminal half is responsible for the 5' incision.</text>
</comment>
<comment type="subunit">
    <text evidence="1">Interacts with UvrB in an incision complex.</text>
</comment>
<comment type="subcellular location">
    <subcellularLocation>
        <location evidence="1">Cytoplasm</location>
    </subcellularLocation>
</comment>
<comment type="similarity">
    <text evidence="1">Belongs to the UvrC family.</text>
</comment>